<dbReference type="EC" id="3.5.4.16" evidence="1"/>
<dbReference type="EMBL" id="CT573326">
    <property type="protein sequence ID" value="CAK18124.1"/>
    <property type="molecule type" value="Genomic_DNA"/>
</dbReference>
<dbReference type="RefSeq" id="WP_011536476.1">
    <property type="nucleotide sequence ID" value="NC_008027.1"/>
</dbReference>
<dbReference type="SMR" id="Q1I2L2"/>
<dbReference type="STRING" id="384676.PSEEN5515"/>
<dbReference type="GeneID" id="32808418"/>
<dbReference type="KEGG" id="pen:PSEEN5515"/>
<dbReference type="eggNOG" id="COG1469">
    <property type="taxonomic scope" value="Bacteria"/>
</dbReference>
<dbReference type="HOGENOM" id="CLU_062816_0_0_6"/>
<dbReference type="OrthoDB" id="239637at2"/>
<dbReference type="UniPathway" id="UPA00848">
    <property type="reaction ID" value="UER00151"/>
</dbReference>
<dbReference type="Proteomes" id="UP000000658">
    <property type="component" value="Chromosome"/>
</dbReference>
<dbReference type="GO" id="GO:0003934">
    <property type="term" value="F:GTP cyclohydrolase I activity"/>
    <property type="evidence" value="ECO:0007669"/>
    <property type="project" value="UniProtKB-UniRule"/>
</dbReference>
<dbReference type="GO" id="GO:0046654">
    <property type="term" value="P:tetrahydrofolate biosynthetic process"/>
    <property type="evidence" value="ECO:0007669"/>
    <property type="project" value="UniProtKB-UniRule"/>
</dbReference>
<dbReference type="Gene3D" id="3.10.270.10">
    <property type="entry name" value="Urate Oxidase"/>
    <property type="match status" value="1"/>
</dbReference>
<dbReference type="HAMAP" id="MF_01527_B">
    <property type="entry name" value="GTP_cyclohydrol_B"/>
    <property type="match status" value="1"/>
</dbReference>
<dbReference type="InterPro" id="IPR022838">
    <property type="entry name" value="GTP_cyclohydrolase_FolE2"/>
</dbReference>
<dbReference type="InterPro" id="IPR003801">
    <property type="entry name" value="GTP_cyclohydrolase_FolE2/MptA"/>
</dbReference>
<dbReference type="NCBIfam" id="NF010200">
    <property type="entry name" value="PRK13674.1-1"/>
    <property type="match status" value="1"/>
</dbReference>
<dbReference type="PANTHER" id="PTHR36445">
    <property type="entry name" value="GTP CYCLOHYDROLASE MPTA"/>
    <property type="match status" value="1"/>
</dbReference>
<dbReference type="PANTHER" id="PTHR36445:SF1">
    <property type="entry name" value="GTP CYCLOHYDROLASE MPTA"/>
    <property type="match status" value="1"/>
</dbReference>
<dbReference type="Pfam" id="PF02649">
    <property type="entry name" value="GCHY-1"/>
    <property type="match status" value="1"/>
</dbReference>
<name>GCH4_PSEE4</name>
<organism>
    <name type="scientific">Pseudomonas entomophila (strain L48)</name>
    <dbReference type="NCBI Taxonomy" id="384676"/>
    <lineage>
        <taxon>Bacteria</taxon>
        <taxon>Pseudomonadati</taxon>
        <taxon>Pseudomonadota</taxon>
        <taxon>Gammaproteobacteria</taxon>
        <taxon>Pseudomonadales</taxon>
        <taxon>Pseudomonadaceae</taxon>
        <taxon>Pseudomonas</taxon>
    </lineage>
</organism>
<sequence length="293" mass="32104">MTSLTLPDIAAQSAQQPLPLDWVGMCGIAMPVQFEGRQLSALADAGVSLDDGASRGIHMSRLYLALEALERDTLTPRLIHQVLEQFLFSHEGLSASAHLRLQFDHLLKRPALVSPLAGWKHYPVAIDARLKAEMFHVELSVEIPYSSTCPCSAALARQLIQERFDQDFTGQAVDRQGVRAWLGSSSGIVATPHSQRSMAKLQVRLVGDELPVTVLIDKAEAALGTAVQTAVKRADEQAFALANGQNLMFCEDAARRLNLALRQLDWVAGFTVRVEHAESLHAHDAVAVSRFQR</sequence>
<gene>
    <name evidence="1" type="primary">folE2</name>
    <name type="ordered locus">PSEEN5515</name>
</gene>
<proteinExistence type="inferred from homology"/>
<protein>
    <recommendedName>
        <fullName evidence="1">GTP cyclohydrolase FolE2</fullName>
        <ecNumber evidence="1">3.5.4.16</ecNumber>
    </recommendedName>
</protein>
<evidence type="ECO:0000255" key="1">
    <source>
        <dbReference type="HAMAP-Rule" id="MF_01527"/>
    </source>
</evidence>
<accession>Q1I2L2</accession>
<feature type="chain" id="PRO_0000289508" description="GTP cyclohydrolase FolE2">
    <location>
        <begin position="1"/>
        <end position="293"/>
    </location>
</feature>
<feature type="site" description="May be catalytically important" evidence="1">
    <location>
        <position position="149"/>
    </location>
</feature>
<comment type="function">
    <text evidence="1">Converts GTP to 7,8-dihydroneopterin triphosphate.</text>
</comment>
<comment type="catalytic activity">
    <reaction evidence="1">
        <text>GTP + H2O = 7,8-dihydroneopterin 3'-triphosphate + formate + H(+)</text>
        <dbReference type="Rhea" id="RHEA:17473"/>
        <dbReference type="ChEBI" id="CHEBI:15377"/>
        <dbReference type="ChEBI" id="CHEBI:15378"/>
        <dbReference type="ChEBI" id="CHEBI:15740"/>
        <dbReference type="ChEBI" id="CHEBI:37565"/>
        <dbReference type="ChEBI" id="CHEBI:58462"/>
        <dbReference type="EC" id="3.5.4.16"/>
    </reaction>
</comment>
<comment type="pathway">
    <text evidence="1">Cofactor biosynthesis; 7,8-dihydroneopterin triphosphate biosynthesis; 7,8-dihydroneopterin triphosphate from GTP: step 1/1.</text>
</comment>
<comment type="similarity">
    <text evidence="1">Belongs to the GTP cyclohydrolase IV family.</text>
</comment>
<reference key="1">
    <citation type="journal article" date="2006" name="Nat. Biotechnol.">
        <title>Complete genome sequence of the entomopathogenic and metabolically versatile soil bacterium Pseudomonas entomophila.</title>
        <authorList>
            <person name="Vodovar N."/>
            <person name="Vallenet D."/>
            <person name="Cruveiller S."/>
            <person name="Rouy Z."/>
            <person name="Barbe V."/>
            <person name="Acosta C."/>
            <person name="Cattolico L."/>
            <person name="Jubin C."/>
            <person name="Lajus A."/>
            <person name="Segurens B."/>
            <person name="Vacherie B."/>
            <person name="Wincker P."/>
            <person name="Weissenbach J."/>
            <person name="Lemaitre B."/>
            <person name="Medigue C."/>
            <person name="Boccard F."/>
        </authorList>
    </citation>
    <scope>NUCLEOTIDE SEQUENCE [LARGE SCALE GENOMIC DNA]</scope>
    <source>
        <strain>L48</strain>
    </source>
</reference>
<keyword id="KW-0378">Hydrolase</keyword>